<reference key="1">
    <citation type="journal article" date="2010" name="Appl. Environ. Microbiol.">
        <title>Conserved symbiotic plasmid DNA sequences in the multireplicon pangenomic structure of Rhizobium etli.</title>
        <authorList>
            <person name="Gonzalez V."/>
            <person name="Acosta J.L."/>
            <person name="Santamaria R.I."/>
            <person name="Bustos P."/>
            <person name="Fernandez J.L."/>
            <person name="Hernandez Gonzalez I.L."/>
            <person name="Diaz R."/>
            <person name="Flores M."/>
            <person name="Palacios R."/>
            <person name="Mora J."/>
            <person name="Davila G."/>
        </authorList>
    </citation>
    <scope>NUCLEOTIDE SEQUENCE [LARGE SCALE GENOMIC DNA]</scope>
    <source>
        <strain>CIAT 652</strain>
    </source>
</reference>
<feature type="chain" id="PRO_1000116339" description="Argininosuccinate lyase">
    <location>
        <begin position="1"/>
        <end position="467"/>
    </location>
</feature>
<evidence type="ECO:0000255" key="1">
    <source>
        <dbReference type="HAMAP-Rule" id="MF_00006"/>
    </source>
</evidence>
<name>ARLY_RHIE6</name>
<comment type="catalytic activity">
    <reaction evidence="1">
        <text>2-(N(omega)-L-arginino)succinate = fumarate + L-arginine</text>
        <dbReference type="Rhea" id="RHEA:24020"/>
        <dbReference type="ChEBI" id="CHEBI:29806"/>
        <dbReference type="ChEBI" id="CHEBI:32682"/>
        <dbReference type="ChEBI" id="CHEBI:57472"/>
        <dbReference type="EC" id="4.3.2.1"/>
    </reaction>
</comment>
<comment type="pathway">
    <text evidence="1">Amino-acid biosynthesis; L-arginine biosynthesis; L-arginine from L-ornithine and carbamoyl phosphate: step 3/3.</text>
</comment>
<comment type="subcellular location">
    <subcellularLocation>
        <location evidence="1">Cytoplasm</location>
    </subcellularLocation>
</comment>
<comment type="similarity">
    <text evidence="1">Belongs to the lyase 1 family. Argininosuccinate lyase subfamily.</text>
</comment>
<organism>
    <name type="scientific">Rhizobium etli (strain CIAT 652)</name>
    <dbReference type="NCBI Taxonomy" id="491916"/>
    <lineage>
        <taxon>Bacteria</taxon>
        <taxon>Pseudomonadati</taxon>
        <taxon>Pseudomonadota</taxon>
        <taxon>Alphaproteobacteria</taxon>
        <taxon>Hyphomicrobiales</taxon>
        <taxon>Rhizobiaceae</taxon>
        <taxon>Rhizobium/Agrobacterium group</taxon>
        <taxon>Rhizobium</taxon>
    </lineage>
</organism>
<dbReference type="EC" id="4.3.2.1" evidence="1"/>
<dbReference type="EMBL" id="CP001074">
    <property type="protein sequence ID" value="ACE92996.1"/>
    <property type="molecule type" value="Genomic_DNA"/>
</dbReference>
<dbReference type="SMR" id="B3PPC1"/>
<dbReference type="KEGG" id="rec:RHECIAT_CH0004066"/>
<dbReference type="eggNOG" id="COG0165">
    <property type="taxonomic scope" value="Bacteria"/>
</dbReference>
<dbReference type="HOGENOM" id="CLU_027272_2_3_5"/>
<dbReference type="UniPathway" id="UPA00068">
    <property type="reaction ID" value="UER00114"/>
</dbReference>
<dbReference type="Proteomes" id="UP000008817">
    <property type="component" value="Chromosome"/>
</dbReference>
<dbReference type="GO" id="GO:0005829">
    <property type="term" value="C:cytosol"/>
    <property type="evidence" value="ECO:0007669"/>
    <property type="project" value="TreeGrafter"/>
</dbReference>
<dbReference type="GO" id="GO:0004056">
    <property type="term" value="F:argininosuccinate lyase activity"/>
    <property type="evidence" value="ECO:0007669"/>
    <property type="project" value="UniProtKB-UniRule"/>
</dbReference>
<dbReference type="GO" id="GO:0042450">
    <property type="term" value="P:arginine biosynthetic process via ornithine"/>
    <property type="evidence" value="ECO:0007669"/>
    <property type="project" value="InterPro"/>
</dbReference>
<dbReference type="GO" id="GO:0006526">
    <property type="term" value="P:L-arginine biosynthetic process"/>
    <property type="evidence" value="ECO:0007669"/>
    <property type="project" value="UniProtKB-UniRule"/>
</dbReference>
<dbReference type="CDD" id="cd01359">
    <property type="entry name" value="Argininosuccinate_lyase"/>
    <property type="match status" value="1"/>
</dbReference>
<dbReference type="FunFam" id="1.10.275.10:FF:000002">
    <property type="entry name" value="Argininosuccinate lyase"/>
    <property type="match status" value="1"/>
</dbReference>
<dbReference type="FunFam" id="1.10.40.30:FF:000001">
    <property type="entry name" value="Argininosuccinate lyase"/>
    <property type="match status" value="1"/>
</dbReference>
<dbReference type="FunFam" id="1.20.200.10:FF:000015">
    <property type="entry name" value="argininosuccinate lyase isoform X2"/>
    <property type="match status" value="1"/>
</dbReference>
<dbReference type="Gene3D" id="1.10.40.30">
    <property type="entry name" value="Fumarase/aspartase (C-terminal domain)"/>
    <property type="match status" value="1"/>
</dbReference>
<dbReference type="Gene3D" id="1.20.200.10">
    <property type="entry name" value="Fumarase/aspartase (Central domain)"/>
    <property type="match status" value="1"/>
</dbReference>
<dbReference type="Gene3D" id="1.10.275.10">
    <property type="entry name" value="Fumarase/aspartase (N-terminal domain)"/>
    <property type="match status" value="1"/>
</dbReference>
<dbReference type="HAMAP" id="MF_00006">
    <property type="entry name" value="Arg_succ_lyase"/>
    <property type="match status" value="1"/>
</dbReference>
<dbReference type="InterPro" id="IPR029419">
    <property type="entry name" value="Arg_succ_lyase_C"/>
</dbReference>
<dbReference type="InterPro" id="IPR009049">
    <property type="entry name" value="Argininosuccinate_lyase"/>
</dbReference>
<dbReference type="InterPro" id="IPR024083">
    <property type="entry name" value="Fumarase/histidase_N"/>
</dbReference>
<dbReference type="InterPro" id="IPR020557">
    <property type="entry name" value="Fumarate_lyase_CS"/>
</dbReference>
<dbReference type="InterPro" id="IPR000362">
    <property type="entry name" value="Fumarate_lyase_fam"/>
</dbReference>
<dbReference type="InterPro" id="IPR022761">
    <property type="entry name" value="Fumarate_lyase_N"/>
</dbReference>
<dbReference type="InterPro" id="IPR008948">
    <property type="entry name" value="L-Aspartase-like"/>
</dbReference>
<dbReference type="NCBIfam" id="TIGR00838">
    <property type="entry name" value="argH"/>
    <property type="match status" value="1"/>
</dbReference>
<dbReference type="PANTHER" id="PTHR43814">
    <property type="entry name" value="ARGININOSUCCINATE LYASE"/>
    <property type="match status" value="1"/>
</dbReference>
<dbReference type="PANTHER" id="PTHR43814:SF1">
    <property type="entry name" value="ARGININOSUCCINATE LYASE"/>
    <property type="match status" value="1"/>
</dbReference>
<dbReference type="Pfam" id="PF14698">
    <property type="entry name" value="ASL_C2"/>
    <property type="match status" value="1"/>
</dbReference>
<dbReference type="Pfam" id="PF00206">
    <property type="entry name" value="Lyase_1"/>
    <property type="match status" value="1"/>
</dbReference>
<dbReference type="PRINTS" id="PR00145">
    <property type="entry name" value="ARGSUCLYASE"/>
</dbReference>
<dbReference type="PRINTS" id="PR00149">
    <property type="entry name" value="FUMRATELYASE"/>
</dbReference>
<dbReference type="SUPFAM" id="SSF48557">
    <property type="entry name" value="L-aspartase-like"/>
    <property type="match status" value="1"/>
</dbReference>
<dbReference type="PROSITE" id="PS00163">
    <property type="entry name" value="FUMARATE_LYASES"/>
    <property type="match status" value="1"/>
</dbReference>
<gene>
    <name evidence="1" type="primary">argH</name>
    <name type="ordered locus">RHECIAT_CH0004066</name>
</gene>
<keyword id="KW-0028">Amino-acid biosynthesis</keyword>
<keyword id="KW-0055">Arginine biosynthesis</keyword>
<keyword id="KW-0963">Cytoplasm</keyword>
<keyword id="KW-0456">Lyase</keyword>
<proteinExistence type="inferred from homology"/>
<protein>
    <recommendedName>
        <fullName evidence="1">Argininosuccinate lyase</fullName>
        <shortName evidence="1">ASAL</shortName>
        <ecNumber evidence="1">4.3.2.1</ecNumber>
    </recommendedName>
    <alternativeName>
        <fullName evidence="1">Arginosuccinase</fullName>
    </alternativeName>
</protein>
<sequence length="467" mass="51047">MAESNTDSKSSNQMWGGRFASGPDAIMEEINASIGFDKKLFAQDIRGSIAHATMLAHQGIISAEDKDKIVHGLNTILSEIESGNFEFSRRLEDIHMNIEARLATLIGPAAGRLHTARSRNDQVALDFRLWVKEELEKTEKMLTGLIAAFLDRAEEHAESVMPGFTHLQTAQPVTFGHHCMAYVEMFGRDRSRVRHAIEHLDESPIGAAALAGTGYPIDRHMTAKALGFREPTRNSIDTVSDRDFAIEFLAIAAITGMHLSRLAEEIVIWSTPQFGFVRLSDAFSTGSSIMPQKKNPDAAELVRAKTGRINGSLIALLTIMKGLPLAYSKDMQEDKEQVFDAAESLELAIAAMTGMVRDMTVNTARMKAAAGSGFSTATDLADWLVREAGLPFRDAHHVTGRAVALAESKGCDLAELPLADLQAIHPDITDKVYDVLTVEASVASRKSFGGTAPSEVRKQIAFWRARN</sequence>
<accession>B3PPC1</accession>